<name>CH603_FRACC</name>
<evidence type="ECO:0000255" key="1">
    <source>
        <dbReference type="HAMAP-Rule" id="MF_00600"/>
    </source>
</evidence>
<gene>
    <name evidence="1" type="primary">groEL3</name>
    <name evidence="1" type="synonym">groL3</name>
    <name type="ordered locus">Francci3_2513</name>
</gene>
<keyword id="KW-0067">ATP-binding</keyword>
<keyword id="KW-0143">Chaperone</keyword>
<keyword id="KW-0963">Cytoplasm</keyword>
<keyword id="KW-0413">Isomerase</keyword>
<keyword id="KW-0547">Nucleotide-binding</keyword>
<keyword id="KW-1185">Reference proteome</keyword>
<comment type="function">
    <text evidence="1">Together with its co-chaperonin GroES, plays an essential role in assisting protein folding. The GroEL-GroES system forms a nano-cage that allows encapsulation of the non-native substrate proteins and provides a physical environment optimized to promote and accelerate protein folding.</text>
</comment>
<comment type="catalytic activity">
    <reaction evidence="1">
        <text>ATP + H2O + a folded polypeptide = ADP + phosphate + an unfolded polypeptide.</text>
        <dbReference type="EC" id="5.6.1.7"/>
    </reaction>
</comment>
<comment type="subunit">
    <text evidence="1">Forms a cylinder of 14 subunits composed of two heptameric rings stacked back-to-back. Interacts with the co-chaperonin GroES.</text>
</comment>
<comment type="subcellular location">
    <subcellularLocation>
        <location evidence="1">Cytoplasm</location>
    </subcellularLocation>
</comment>
<comment type="similarity">
    <text evidence="1">Belongs to the chaperonin (HSP60) family.</text>
</comment>
<reference key="1">
    <citation type="journal article" date="2007" name="Genome Res.">
        <title>Genome characteristics of facultatively symbiotic Frankia sp. strains reflect host range and host plant biogeography.</title>
        <authorList>
            <person name="Normand P."/>
            <person name="Lapierre P."/>
            <person name="Tisa L.S."/>
            <person name="Gogarten J.P."/>
            <person name="Alloisio N."/>
            <person name="Bagnarol E."/>
            <person name="Bassi C.A."/>
            <person name="Berry A.M."/>
            <person name="Bickhart D.M."/>
            <person name="Choisne N."/>
            <person name="Couloux A."/>
            <person name="Cournoyer B."/>
            <person name="Cruveiller S."/>
            <person name="Daubin V."/>
            <person name="Demange N."/>
            <person name="Francino M.P."/>
            <person name="Goltsman E."/>
            <person name="Huang Y."/>
            <person name="Kopp O.R."/>
            <person name="Labarre L."/>
            <person name="Lapidus A."/>
            <person name="Lavire C."/>
            <person name="Marechal J."/>
            <person name="Martinez M."/>
            <person name="Mastronunzio J.E."/>
            <person name="Mullin B.C."/>
            <person name="Niemann J."/>
            <person name="Pujic P."/>
            <person name="Rawnsley T."/>
            <person name="Rouy Z."/>
            <person name="Schenowitz C."/>
            <person name="Sellstedt A."/>
            <person name="Tavares F."/>
            <person name="Tomkins J.P."/>
            <person name="Vallenet D."/>
            <person name="Valverde C."/>
            <person name="Wall L.G."/>
            <person name="Wang Y."/>
            <person name="Medigue C."/>
            <person name="Benson D.R."/>
        </authorList>
    </citation>
    <scope>NUCLEOTIDE SEQUENCE [LARGE SCALE GENOMIC DNA]</scope>
    <source>
        <strain>DSM 45818 / CECT 9043 / HFP020203 / CcI3</strain>
    </source>
</reference>
<sequence length="549" mass="57442">MAKDLRFNVEARRLLEAGVNALADAVKVTLGPKGRNAVIEKLTGPPTITNDGVTIAREIQLRNPFANMGAQLVKEVATKTNGTAGDGTTTATVLAQALVREGLHAVDGGANPMFLKNGIEAAVAALLEEFEKYRGEVEGEADLARVATLAANNDARIGDVVAAALGRVGCDGVVTVEESPIFGLEVSFVDGIELDNGYLSPYMVTDTERMEAAYTDPYILLTNEKISQVQTLMPVLELVTRAGGQLIVFAENVEGPALGMLVANNVHGTFRSAVVRAPGFGHRRLAELNDLAVFLGGQVITADAGLSLDRVTLGQLGRCKKATITEHATTIVDGAGSATEIHARIDQLKRELERAENPHDQDTLQTRIARLSGGVAVIRVGAVTGVELKEKLHRVEDSLAAARAALAEGVVAGGGTALLQAASALDKLTLTGDAAEGREIVRRAIAEPLRWIAINAGYDGDEVVKRVAELPRGHGFNAATGEYGEMAGFGVIDPVKVTRCALQSAASIAALLLTTETLVVEEVIGNPGAVIAPGFGDLAEGLVRPSNIA</sequence>
<dbReference type="EC" id="5.6.1.7" evidence="1"/>
<dbReference type="EMBL" id="CP000249">
    <property type="protein sequence ID" value="ABD11880.1"/>
    <property type="molecule type" value="Genomic_DNA"/>
</dbReference>
<dbReference type="SMR" id="Q2JA12"/>
<dbReference type="STRING" id="106370.Francci3_2513"/>
<dbReference type="KEGG" id="fra:Francci3_2513"/>
<dbReference type="eggNOG" id="COG0459">
    <property type="taxonomic scope" value="Bacteria"/>
</dbReference>
<dbReference type="HOGENOM" id="CLU_016503_3_0_11"/>
<dbReference type="OrthoDB" id="9766614at2"/>
<dbReference type="PhylomeDB" id="Q2JA12"/>
<dbReference type="Proteomes" id="UP000001937">
    <property type="component" value="Chromosome"/>
</dbReference>
<dbReference type="GO" id="GO:0005737">
    <property type="term" value="C:cytoplasm"/>
    <property type="evidence" value="ECO:0007669"/>
    <property type="project" value="UniProtKB-SubCell"/>
</dbReference>
<dbReference type="GO" id="GO:0005524">
    <property type="term" value="F:ATP binding"/>
    <property type="evidence" value="ECO:0007669"/>
    <property type="project" value="UniProtKB-UniRule"/>
</dbReference>
<dbReference type="GO" id="GO:0140662">
    <property type="term" value="F:ATP-dependent protein folding chaperone"/>
    <property type="evidence" value="ECO:0007669"/>
    <property type="project" value="InterPro"/>
</dbReference>
<dbReference type="GO" id="GO:0016853">
    <property type="term" value="F:isomerase activity"/>
    <property type="evidence" value="ECO:0007669"/>
    <property type="project" value="UniProtKB-KW"/>
</dbReference>
<dbReference type="GO" id="GO:0051082">
    <property type="term" value="F:unfolded protein binding"/>
    <property type="evidence" value="ECO:0007669"/>
    <property type="project" value="UniProtKB-UniRule"/>
</dbReference>
<dbReference type="GO" id="GO:0042026">
    <property type="term" value="P:protein refolding"/>
    <property type="evidence" value="ECO:0007669"/>
    <property type="project" value="UniProtKB-UniRule"/>
</dbReference>
<dbReference type="CDD" id="cd03344">
    <property type="entry name" value="GroEL"/>
    <property type="match status" value="1"/>
</dbReference>
<dbReference type="FunFam" id="3.50.7.10:FF:000001">
    <property type="entry name" value="60 kDa chaperonin"/>
    <property type="match status" value="1"/>
</dbReference>
<dbReference type="Gene3D" id="3.50.7.10">
    <property type="entry name" value="GroEL"/>
    <property type="match status" value="1"/>
</dbReference>
<dbReference type="Gene3D" id="1.10.560.10">
    <property type="entry name" value="GroEL-like equatorial domain"/>
    <property type="match status" value="1"/>
</dbReference>
<dbReference type="Gene3D" id="3.30.260.10">
    <property type="entry name" value="TCP-1-like chaperonin intermediate domain"/>
    <property type="match status" value="1"/>
</dbReference>
<dbReference type="HAMAP" id="MF_00600">
    <property type="entry name" value="CH60"/>
    <property type="match status" value="1"/>
</dbReference>
<dbReference type="InterPro" id="IPR001844">
    <property type="entry name" value="Cpn60/GroEL"/>
</dbReference>
<dbReference type="InterPro" id="IPR002423">
    <property type="entry name" value="Cpn60/GroEL/TCP-1"/>
</dbReference>
<dbReference type="InterPro" id="IPR027409">
    <property type="entry name" value="GroEL-like_apical_dom_sf"/>
</dbReference>
<dbReference type="InterPro" id="IPR027413">
    <property type="entry name" value="GROEL-like_equatorial_sf"/>
</dbReference>
<dbReference type="InterPro" id="IPR027410">
    <property type="entry name" value="TCP-1-like_intermed_sf"/>
</dbReference>
<dbReference type="NCBIfam" id="TIGR02348">
    <property type="entry name" value="GroEL"/>
    <property type="match status" value="1"/>
</dbReference>
<dbReference type="NCBIfam" id="NF000592">
    <property type="entry name" value="PRK00013.1"/>
    <property type="match status" value="1"/>
</dbReference>
<dbReference type="NCBIfam" id="NF009487">
    <property type="entry name" value="PRK12849.1"/>
    <property type="match status" value="1"/>
</dbReference>
<dbReference type="NCBIfam" id="NF009488">
    <property type="entry name" value="PRK12850.1"/>
    <property type="match status" value="1"/>
</dbReference>
<dbReference type="NCBIfam" id="NF009489">
    <property type="entry name" value="PRK12851.1"/>
    <property type="match status" value="1"/>
</dbReference>
<dbReference type="PANTHER" id="PTHR45633">
    <property type="entry name" value="60 KDA HEAT SHOCK PROTEIN, MITOCHONDRIAL"/>
    <property type="match status" value="1"/>
</dbReference>
<dbReference type="Pfam" id="PF00118">
    <property type="entry name" value="Cpn60_TCP1"/>
    <property type="match status" value="1"/>
</dbReference>
<dbReference type="PRINTS" id="PR00298">
    <property type="entry name" value="CHAPERONIN60"/>
</dbReference>
<dbReference type="SUPFAM" id="SSF52029">
    <property type="entry name" value="GroEL apical domain-like"/>
    <property type="match status" value="1"/>
</dbReference>
<dbReference type="SUPFAM" id="SSF48592">
    <property type="entry name" value="GroEL equatorial domain-like"/>
    <property type="match status" value="1"/>
</dbReference>
<dbReference type="SUPFAM" id="SSF54849">
    <property type="entry name" value="GroEL-intermediate domain like"/>
    <property type="match status" value="1"/>
</dbReference>
<protein>
    <recommendedName>
        <fullName evidence="1">Chaperonin GroEL 3</fullName>
        <ecNumber evidence="1">5.6.1.7</ecNumber>
    </recommendedName>
    <alternativeName>
        <fullName evidence="1">60 kDa chaperonin 3</fullName>
    </alternativeName>
    <alternativeName>
        <fullName evidence="1">Chaperonin-60 3</fullName>
        <shortName evidence="1">Cpn60 3</shortName>
    </alternativeName>
</protein>
<feature type="chain" id="PRO_0000256913" description="Chaperonin GroEL 3">
    <location>
        <begin position="1"/>
        <end position="549"/>
    </location>
</feature>
<feature type="binding site" evidence="1">
    <location>
        <begin position="29"/>
        <end position="32"/>
    </location>
    <ligand>
        <name>ATP</name>
        <dbReference type="ChEBI" id="CHEBI:30616"/>
    </ligand>
</feature>
<feature type="binding site" evidence="1">
    <location>
        <begin position="86"/>
        <end position="90"/>
    </location>
    <ligand>
        <name>ATP</name>
        <dbReference type="ChEBI" id="CHEBI:30616"/>
    </ligand>
</feature>
<feature type="binding site" evidence="1">
    <location>
        <position position="414"/>
    </location>
    <ligand>
        <name>ATP</name>
        <dbReference type="ChEBI" id="CHEBI:30616"/>
    </ligand>
</feature>
<feature type="binding site" evidence="1">
    <location>
        <begin position="477"/>
        <end position="479"/>
    </location>
    <ligand>
        <name>ATP</name>
        <dbReference type="ChEBI" id="CHEBI:30616"/>
    </ligand>
</feature>
<feature type="binding site" evidence="1">
    <location>
        <position position="493"/>
    </location>
    <ligand>
        <name>ATP</name>
        <dbReference type="ChEBI" id="CHEBI:30616"/>
    </ligand>
</feature>
<organism>
    <name type="scientific">Frankia casuarinae (strain DSM 45818 / CECT 9043 / HFP020203 / CcI3)</name>
    <dbReference type="NCBI Taxonomy" id="106370"/>
    <lineage>
        <taxon>Bacteria</taxon>
        <taxon>Bacillati</taxon>
        <taxon>Actinomycetota</taxon>
        <taxon>Actinomycetes</taxon>
        <taxon>Frankiales</taxon>
        <taxon>Frankiaceae</taxon>
        <taxon>Frankia</taxon>
    </lineage>
</organism>
<proteinExistence type="inferred from homology"/>
<accession>Q2JA12</accession>